<feature type="chain" id="PRO_0000247465" description="Tubulin alpha-2 chain">
    <location>
        <begin position="1"/>
        <end position="451"/>
    </location>
</feature>
<feature type="active site" evidence="2">
    <location>
        <position position="254"/>
    </location>
</feature>
<feature type="binding site" evidence="2">
    <location>
        <position position="11"/>
    </location>
    <ligand>
        <name>GTP</name>
        <dbReference type="ChEBI" id="CHEBI:37565"/>
    </ligand>
</feature>
<feature type="binding site" evidence="2">
    <location>
        <position position="71"/>
    </location>
    <ligand>
        <name>GTP</name>
        <dbReference type="ChEBI" id="CHEBI:37565"/>
    </ligand>
</feature>
<feature type="binding site" evidence="2">
    <location>
        <position position="71"/>
    </location>
    <ligand>
        <name>Mg(2+)</name>
        <dbReference type="ChEBI" id="CHEBI:18420"/>
    </ligand>
</feature>
<feature type="binding site" evidence="2">
    <location>
        <position position="144"/>
    </location>
    <ligand>
        <name>GTP</name>
        <dbReference type="ChEBI" id="CHEBI:37565"/>
    </ligand>
</feature>
<feature type="binding site" evidence="2">
    <location>
        <position position="145"/>
    </location>
    <ligand>
        <name>GTP</name>
        <dbReference type="ChEBI" id="CHEBI:37565"/>
    </ligand>
</feature>
<feature type="binding site" evidence="2">
    <location>
        <position position="179"/>
    </location>
    <ligand>
        <name>GTP</name>
        <dbReference type="ChEBI" id="CHEBI:37565"/>
    </ligand>
</feature>
<feature type="binding site" evidence="2">
    <location>
        <position position="206"/>
    </location>
    <ligand>
        <name>GTP</name>
        <dbReference type="ChEBI" id="CHEBI:37565"/>
    </ligand>
</feature>
<feature type="binding site" evidence="2">
    <location>
        <position position="228"/>
    </location>
    <ligand>
        <name>GTP</name>
        <dbReference type="ChEBI" id="CHEBI:37565"/>
    </ligand>
</feature>
<feature type="site" description="Involved in polymerization" evidence="1">
    <location>
        <position position="451"/>
    </location>
</feature>
<feature type="modified residue" description="N6-acetyllysine" evidence="1">
    <location>
        <position position="40"/>
    </location>
</feature>
<feature type="sequence conflict" description="In Ref. 1; CAA62917." evidence="3" ref="1">
    <original>V</original>
    <variation>M</variation>
    <location>
        <position position="74"/>
    </location>
</feature>
<feature type="sequence conflict" description="In Ref. 1; CAA62917." evidence="3" ref="1">
    <original>L</original>
    <variation>V</variation>
    <location>
        <position position="92"/>
    </location>
</feature>
<feature type="sequence conflict" description="In Ref. 1; CAA62917." evidence="3" ref="1">
    <original>L</original>
    <variation>R</variation>
    <location>
        <position position="227"/>
    </location>
</feature>
<feature type="sequence conflict" description="In Ref. 1; CAA62917." evidence="3" ref="1">
    <original>V</original>
    <variation>A</variation>
    <location>
        <position position="275"/>
    </location>
</feature>
<accession>Q53M52</accession>
<accession>Q43606</accession>
<gene>
    <name type="primary">TUBA</name>
    <name type="ordered locus">Os11g0247300</name>
    <name type="ordered locus">LOC_Os11g14220</name>
</gene>
<evidence type="ECO:0000250" key="1"/>
<evidence type="ECO:0000250" key="2">
    <source>
        <dbReference type="UniProtKB" id="P68363"/>
    </source>
</evidence>
<evidence type="ECO:0000305" key="3"/>
<comment type="function">
    <text>Tubulin is the major constituent of microtubules, a cylinder consisting of laterally associated linear protofilaments composed of alpha- and beta-tubulin heterodimers. Microtubules grow by the addition of GTP-tubulin dimers to the microtubule end, where a stabilizing cap forms. Below the cap, tubulin dimers are in GDP-bound state, owing to GTPase activity of alpha-tubulin.</text>
</comment>
<comment type="catalytic activity">
    <reaction evidence="2">
        <text>GTP + H2O = GDP + phosphate + H(+)</text>
        <dbReference type="Rhea" id="RHEA:19669"/>
        <dbReference type="ChEBI" id="CHEBI:15377"/>
        <dbReference type="ChEBI" id="CHEBI:15378"/>
        <dbReference type="ChEBI" id="CHEBI:37565"/>
        <dbReference type="ChEBI" id="CHEBI:43474"/>
        <dbReference type="ChEBI" id="CHEBI:58189"/>
    </reaction>
    <physiologicalReaction direction="left-to-right" evidence="2">
        <dbReference type="Rhea" id="RHEA:19670"/>
    </physiologicalReaction>
</comment>
<comment type="cofactor">
    <cofactor evidence="2">
        <name>Mg(2+)</name>
        <dbReference type="ChEBI" id="CHEBI:18420"/>
    </cofactor>
</comment>
<comment type="subunit">
    <text>Dimer of alpha and beta chains. A typical microtubule is a hollow water-filled tube with an outer diameter of 25 nm and an inner diameter of 15 nM. Alpha-beta heterodimers associate head-to-tail to form protofilaments running lengthwise along the microtubule wall with the beta-tubulin subunit facing the microtubule plus end conferring a structural polarity. Microtubules usually have 13 protofilaments but different protofilament numbers can be found in some organisms and specialized cells.</text>
</comment>
<comment type="subcellular location">
    <subcellularLocation>
        <location evidence="1">Cytoplasm</location>
        <location evidence="1">Cytoskeleton</location>
    </subcellularLocation>
</comment>
<comment type="PTM">
    <text evidence="1">Undergoes a tyrosination/detyrosination cycle, the cyclic removal and re-addition of a C-terminal tyrosine residue by the enzymes tubulin tyrosine carboxypeptidase (TTCP) and tubulin tyrosine ligase (TTL), respectively.</text>
</comment>
<comment type="PTM">
    <text evidence="1">Acetylation of alpha chains at Lys-40 stabilizes microtubules and affects affinity and processivity of microtubule motors. This modification has a role in multiple cellular functions, ranging from cell motility, cell cycle progression or cell differentiation to intracellular trafficking and signaling (By similarity).</text>
</comment>
<comment type="similarity">
    <text evidence="3">Belongs to the tubulin family.</text>
</comment>
<reference key="1">
    <citation type="submission" date="1995-12" db="EMBL/GenBank/DDBJ databases">
        <title>Rice alpha-tubulin cDNAs.</title>
        <authorList>
            <person name="Maestroni A."/>
            <person name="Giani S."/>
            <person name="Breviario D."/>
        </authorList>
    </citation>
    <scope>NUCLEOTIDE SEQUENCE [MRNA]</scope>
    <source>
        <strain>cv. Arborio</strain>
        <tissue>Coleoptile</tissue>
    </source>
</reference>
<reference key="2">
    <citation type="journal article" date="2005" name="BMC Biol.">
        <title>The sequence of rice chromosomes 11 and 12, rich in disease resistance genes and recent gene duplications.</title>
        <authorList>
            <consortium name="The rice chromosomes 11 and 12 sequencing consortia"/>
        </authorList>
    </citation>
    <scope>NUCLEOTIDE SEQUENCE [LARGE SCALE GENOMIC DNA]</scope>
    <source>
        <strain>cv. Nipponbare</strain>
    </source>
</reference>
<reference key="3">
    <citation type="journal article" date="2005" name="Nature">
        <title>The map-based sequence of the rice genome.</title>
        <authorList>
            <consortium name="International rice genome sequencing project (IRGSP)"/>
        </authorList>
    </citation>
    <scope>NUCLEOTIDE SEQUENCE [LARGE SCALE GENOMIC DNA]</scope>
    <source>
        <strain>cv. Nipponbare</strain>
    </source>
</reference>
<reference key="4">
    <citation type="journal article" date="2013" name="Rice">
        <title>Improvement of the Oryza sativa Nipponbare reference genome using next generation sequence and optical map data.</title>
        <authorList>
            <person name="Kawahara Y."/>
            <person name="de la Bastide M."/>
            <person name="Hamilton J.P."/>
            <person name="Kanamori H."/>
            <person name="McCombie W.R."/>
            <person name="Ouyang S."/>
            <person name="Schwartz D.C."/>
            <person name="Tanaka T."/>
            <person name="Wu J."/>
            <person name="Zhou S."/>
            <person name="Childs K.L."/>
            <person name="Davidson R.M."/>
            <person name="Lin H."/>
            <person name="Quesada-Ocampo L."/>
            <person name="Vaillancourt B."/>
            <person name="Sakai H."/>
            <person name="Lee S.S."/>
            <person name="Kim J."/>
            <person name="Numa H."/>
            <person name="Itoh T."/>
            <person name="Buell C.R."/>
            <person name="Matsumoto T."/>
        </authorList>
    </citation>
    <scope>GENOME REANNOTATION</scope>
    <source>
        <strain>cv. Nipponbare</strain>
    </source>
</reference>
<protein>
    <recommendedName>
        <fullName>Tubulin alpha-2 chain</fullName>
        <ecNumber evidence="2">3.6.5.-</ecNumber>
    </recommendedName>
</protein>
<organism>
    <name type="scientific">Oryza sativa subsp. japonica</name>
    <name type="common">Rice</name>
    <dbReference type="NCBI Taxonomy" id="39947"/>
    <lineage>
        <taxon>Eukaryota</taxon>
        <taxon>Viridiplantae</taxon>
        <taxon>Streptophyta</taxon>
        <taxon>Embryophyta</taxon>
        <taxon>Tracheophyta</taxon>
        <taxon>Spermatophyta</taxon>
        <taxon>Magnoliopsida</taxon>
        <taxon>Liliopsida</taxon>
        <taxon>Poales</taxon>
        <taxon>Poaceae</taxon>
        <taxon>BOP clade</taxon>
        <taxon>Oryzoideae</taxon>
        <taxon>Oryzeae</taxon>
        <taxon>Oryzinae</taxon>
        <taxon>Oryza</taxon>
        <taxon>Oryza sativa</taxon>
    </lineage>
</organism>
<proteinExistence type="evidence at transcript level"/>
<dbReference type="EC" id="3.6.5.-" evidence="2"/>
<dbReference type="EMBL" id="X91807">
    <property type="protein sequence ID" value="CAA62917.1"/>
    <property type="molecule type" value="mRNA"/>
</dbReference>
<dbReference type="EMBL" id="AC137924">
    <property type="protein sequence ID" value="AAX96762.1"/>
    <property type="molecule type" value="Genomic_DNA"/>
</dbReference>
<dbReference type="EMBL" id="DP000010">
    <property type="protein sequence ID" value="ABA92352.1"/>
    <property type="molecule type" value="Genomic_DNA"/>
</dbReference>
<dbReference type="EMBL" id="AP014967">
    <property type="protein sequence ID" value="BAT13424.1"/>
    <property type="molecule type" value="Genomic_DNA"/>
</dbReference>
<dbReference type="RefSeq" id="XP_015616885.1">
    <property type="nucleotide sequence ID" value="XM_015761399.1"/>
</dbReference>
<dbReference type="SMR" id="Q53M52"/>
<dbReference type="FunCoup" id="Q53M52">
    <property type="interactions" value="1503"/>
</dbReference>
<dbReference type="STRING" id="39947.Q53M52"/>
<dbReference type="PaxDb" id="39947-Q53M52"/>
<dbReference type="EnsemblPlants" id="Os11t0247300-01">
    <property type="protein sequence ID" value="Os11t0247300-01"/>
    <property type="gene ID" value="Os11g0247300"/>
</dbReference>
<dbReference type="Gramene" id="Os11t0247300-01">
    <property type="protein sequence ID" value="Os11t0247300-01"/>
    <property type="gene ID" value="Os11g0247300"/>
</dbReference>
<dbReference type="eggNOG" id="KOG1376">
    <property type="taxonomic scope" value="Eukaryota"/>
</dbReference>
<dbReference type="HOGENOM" id="CLU_015718_0_0_1"/>
<dbReference type="InParanoid" id="Q53M52"/>
<dbReference type="OMA" id="RRVTDNC"/>
<dbReference type="OrthoDB" id="1853138at2759"/>
<dbReference type="PlantReactome" id="R-OSA-9035605">
    <property type="pathway name" value="Regulation of seed size"/>
</dbReference>
<dbReference type="Proteomes" id="UP000000763">
    <property type="component" value="Chromosome 11"/>
</dbReference>
<dbReference type="Proteomes" id="UP000059680">
    <property type="component" value="Chromosome 11"/>
</dbReference>
<dbReference type="ExpressionAtlas" id="Q53M52">
    <property type="expression patterns" value="baseline and differential"/>
</dbReference>
<dbReference type="GO" id="GO:0005737">
    <property type="term" value="C:cytoplasm"/>
    <property type="evidence" value="ECO:0000318"/>
    <property type="project" value="GO_Central"/>
</dbReference>
<dbReference type="GO" id="GO:0005874">
    <property type="term" value="C:microtubule"/>
    <property type="evidence" value="ECO:0000318"/>
    <property type="project" value="GO_Central"/>
</dbReference>
<dbReference type="GO" id="GO:0005525">
    <property type="term" value="F:GTP binding"/>
    <property type="evidence" value="ECO:0000318"/>
    <property type="project" value="GO_Central"/>
</dbReference>
<dbReference type="GO" id="GO:0016787">
    <property type="term" value="F:hydrolase activity"/>
    <property type="evidence" value="ECO:0007669"/>
    <property type="project" value="UniProtKB-KW"/>
</dbReference>
<dbReference type="GO" id="GO:0046872">
    <property type="term" value="F:metal ion binding"/>
    <property type="evidence" value="ECO:0007669"/>
    <property type="project" value="UniProtKB-KW"/>
</dbReference>
<dbReference type="GO" id="GO:0005200">
    <property type="term" value="F:structural constituent of cytoskeleton"/>
    <property type="evidence" value="ECO:0000318"/>
    <property type="project" value="GO_Central"/>
</dbReference>
<dbReference type="GO" id="GO:0000226">
    <property type="term" value="P:microtubule cytoskeleton organization"/>
    <property type="evidence" value="ECO:0000318"/>
    <property type="project" value="GO_Central"/>
</dbReference>
<dbReference type="GO" id="GO:0000278">
    <property type="term" value="P:mitotic cell cycle"/>
    <property type="evidence" value="ECO:0000318"/>
    <property type="project" value="GO_Central"/>
</dbReference>
<dbReference type="CDD" id="cd02186">
    <property type="entry name" value="alpha_tubulin"/>
    <property type="match status" value="1"/>
</dbReference>
<dbReference type="FunFam" id="1.10.287.600:FF:000001">
    <property type="entry name" value="Tubulin alpha chain"/>
    <property type="match status" value="1"/>
</dbReference>
<dbReference type="FunFam" id="3.30.1330.20:FF:000001">
    <property type="entry name" value="Tubulin alpha chain"/>
    <property type="match status" value="1"/>
</dbReference>
<dbReference type="FunFam" id="3.40.50.1440:FF:000004">
    <property type="entry name" value="Tubulin alpha chain"/>
    <property type="match status" value="1"/>
</dbReference>
<dbReference type="Gene3D" id="1.10.287.600">
    <property type="entry name" value="Helix hairpin bin"/>
    <property type="match status" value="1"/>
</dbReference>
<dbReference type="Gene3D" id="3.30.1330.20">
    <property type="entry name" value="Tubulin/FtsZ, C-terminal domain"/>
    <property type="match status" value="1"/>
</dbReference>
<dbReference type="Gene3D" id="3.40.50.1440">
    <property type="entry name" value="Tubulin/FtsZ, GTPase domain"/>
    <property type="match status" value="1"/>
</dbReference>
<dbReference type="InterPro" id="IPR002452">
    <property type="entry name" value="Alpha_tubulin"/>
</dbReference>
<dbReference type="InterPro" id="IPR008280">
    <property type="entry name" value="Tub_FtsZ_C"/>
</dbReference>
<dbReference type="InterPro" id="IPR000217">
    <property type="entry name" value="Tubulin"/>
</dbReference>
<dbReference type="InterPro" id="IPR037103">
    <property type="entry name" value="Tubulin/FtsZ-like_C"/>
</dbReference>
<dbReference type="InterPro" id="IPR018316">
    <property type="entry name" value="Tubulin/FtsZ_2-layer-sand-dom"/>
</dbReference>
<dbReference type="InterPro" id="IPR036525">
    <property type="entry name" value="Tubulin/FtsZ_GTPase_sf"/>
</dbReference>
<dbReference type="InterPro" id="IPR023123">
    <property type="entry name" value="Tubulin_C"/>
</dbReference>
<dbReference type="InterPro" id="IPR017975">
    <property type="entry name" value="Tubulin_CS"/>
</dbReference>
<dbReference type="InterPro" id="IPR003008">
    <property type="entry name" value="Tubulin_FtsZ_GTPase"/>
</dbReference>
<dbReference type="PANTHER" id="PTHR11588">
    <property type="entry name" value="TUBULIN"/>
    <property type="match status" value="1"/>
</dbReference>
<dbReference type="Pfam" id="PF00091">
    <property type="entry name" value="Tubulin"/>
    <property type="match status" value="1"/>
</dbReference>
<dbReference type="Pfam" id="PF03953">
    <property type="entry name" value="Tubulin_C"/>
    <property type="match status" value="1"/>
</dbReference>
<dbReference type="PRINTS" id="PR01162">
    <property type="entry name" value="ALPHATUBULIN"/>
</dbReference>
<dbReference type="PRINTS" id="PR01161">
    <property type="entry name" value="TUBULIN"/>
</dbReference>
<dbReference type="SMART" id="SM00864">
    <property type="entry name" value="Tubulin"/>
    <property type="match status" value="1"/>
</dbReference>
<dbReference type="SMART" id="SM00865">
    <property type="entry name" value="Tubulin_C"/>
    <property type="match status" value="1"/>
</dbReference>
<dbReference type="SUPFAM" id="SSF55307">
    <property type="entry name" value="Tubulin C-terminal domain-like"/>
    <property type="match status" value="1"/>
</dbReference>
<dbReference type="SUPFAM" id="SSF52490">
    <property type="entry name" value="Tubulin nucleotide-binding domain-like"/>
    <property type="match status" value="1"/>
</dbReference>
<dbReference type="PROSITE" id="PS00227">
    <property type="entry name" value="TUBULIN"/>
    <property type="match status" value="1"/>
</dbReference>
<sequence>MRECISIHIGQAGIQVGNACWELYCLEHGIQPDGQMPGDKTVGGGDDAFNTFFSETGAGKHVPRAVFVDLEPTVIDEVRTGDYRQLFHPEQLISGKEDAANNFARGHYTIGKEIVDLCLDRIRKLADNCTGLQGFLVFNAVGGGTGSGLGSLLLERLSVDYGKKSKLGFTVYPSPQVSTSVVEPYNSVLSTHSLLEHTDVAVLLDNEAIYDICRRSLDIERPTYTNLNRLVSQVISSLTASLRFDGALNVDVNEFQTNLVPYPRIHFMLSSYAPVISAEKAYHEQLSVAEITNSAFEPSSMMAKCDPRHGKYMACCLMYRGDVVPKDVNAAVATIKTKRTIQFVDWCPTGFKCGINYQPPSVVPGGDLAKVQRAVCMISNSTSVVEVFSRIDIKFDLMYSKRAFVHWYVGEGMEEGEFSEAREDLAALEKDYEEVGSEFDDGDEGDEGDEY</sequence>
<keyword id="KW-0007">Acetylation</keyword>
<keyword id="KW-0963">Cytoplasm</keyword>
<keyword id="KW-0206">Cytoskeleton</keyword>
<keyword id="KW-0342">GTP-binding</keyword>
<keyword id="KW-0378">Hydrolase</keyword>
<keyword id="KW-0460">Magnesium</keyword>
<keyword id="KW-0479">Metal-binding</keyword>
<keyword id="KW-0493">Microtubule</keyword>
<keyword id="KW-0547">Nucleotide-binding</keyword>
<keyword id="KW-1185">Reference proteome</keyword>
<name>TBA2_ORYSJ</name>